<proteinExistence type="evidence at protein level"/>
<keyword id="KW-0963">Cytoplasm</keyword>
<keyword id="KW-0524">Neurogenesis</keyword>
<keyword id="KW-1185">Reference proteome</keyword>
<reference evidence="7" key="1">
    <citation type="journal article" date="2005" name="Science">
        <title>The transcriptional landscape of the mammalian genome.</title>
        <authorList>
            <person name="Carninci P."/>
            <person name="Kasukawa T."/>
            <person name="Katayama S."/>
            <person name="Gough J."/>
            <person name="Frith M.C."/>
            <person name="Maeda N."/>
            <person name="Oyama R."/>
            <person name="Ravasi T."/>
            <person name="Lenhard B."/>
            <person name="Wells C."/>
            <person name="Kodzius R."/>
            <person name="Shimokawa K."/>
            <person name="Bajic V.B."/>
            <person name="Brenner S.E."/>
            <person name="Batalov S."/>
            <person name="Forrest A.R."/>
            <person name="Zavolan M."/>
            <person name="Davis M.J."/>
            <person name="Wilming L.G."/>
            <person name="Aidinis V."/>
            <person name="Allen J.E."/>
            <person name="Ambesi-Impiombato A."/>
            <person name="Apweiler R."/>
            <person name="Aturaliya R.N."/>
            <person name="Bailey T.L."/>
            <person name="Bansal M."/>
            <person name="Baxter L."/>
            <person name="Beisel K.W."/>
            <person name="Bersano T."/>
            <person name="Bono H."/>
            <person name="Chalk A.M."/>
            <person name="Chiu K.P."/>
            <person name="Choudhary V."/>
            <person name="Christoffels A."/>
            <person name="Clutterbuck D.R."/>
            <person name="Crowe M.L."/>
            <person name="Dalla E."/>
            <person name="Dalrymple B.P."/>
            <person name="de Bono B."/>
            <person name="Della Gatta G."/>
            <person name="di Bernardo D."/>
            <person name="Down T."/>
            <person name="Engstrom P."/>
            <person name="Fagiolini M."/>
            <person name="Faulkner G."/>
            <person name="Fletcher C.F."/>
            <person name="Fukushima T."/>
            <person name="Furuno M."/>
            <person name="Futaki S."/>
            <person name="Gariboldi M."/>
            <person name="Georgii-Hemming P."/>
            <person name="Gingeras T.R."/>
            <person name="Gojobori T."/>
            <person name="Green R.E."/>
            <person name="Gustincich S."/>
            <person name="Harbers M."/>
            <person name="Hayashi Y."/>
            <person name="Hensch T.K."/>
            <person name="Hirokawa N."/>
            <person name="Hill D."/>
            <person name="Huminiecki L."/>
            <person name="Iacono M."/>
            <person name="Ikeo K."/>
            <person name="Iwama A."/>
            <person name="Ishikawa T."/>
            <person name="Jakt M."/>
            <person name="Kanapin A."/>
            <person name="Katoh M."/>
            <person name="Kawasawa Y."/>
            <person name="Kelso J."/>
            <person name="Kitamura H."/>
            <person name="Kitano H."/>
            <person name="Kollias G."/>
            <person name="Krishnan S.P."/>
            <person name="Kruger A."/>
            <person name="Kummerfeld S.K."/>
            <person name="Kurochkin I.V."/>
            <person name="Lareau L.F."/>
            <person name="Lazarevic D."/>
            <person name="Lipovich L."/>
            <person name="Liu J."/>
            <person name="Liuni S."/>
            <person name="McWilliam S."/>
            <person name="Madan Babu M."/>
            <person name="Madera M."/>
            <person name="Marchionni L."/>
            <person name="Matsuda H."/>
            <person name="Matsuzawa S."/>
            <person name="Miki H."/>
            <person name="Mignone F."/>
            <person name="Miyake S."/>
            <person name="Morris K."/>
            <person name="Mottagui-Tabar S."/>
            <person name="Mulder N."/>
            <person name="Nakano N."/>
            <person name="Nakauchi H."/>
            <person name="Ng P."/>
            <person name="Nilsson R."/>
            <person name="Nishiguchi S."/>
            <person name="Nishikawa S."/>
            <person name="Nori F."/>
            <person name="Ohara O."/>
            <person name="Okazaki Y."/>
            <person name="Orlando V."/>
            <person name="Pang K.C."/>
            <person name="Pavan W.J."/>
            <person name="Pavesi G."/>
            <person name="Pesole G."/>
            <person name="Petrovsky N."/>
            <person name="Piazza S."/>
            <person name="Reed J."/>
            <person name="Reid J.F."/>
            <person name="Ring B.Z."/>
            <person name="Ringwald M."/>
            <person name="Rost B."/>
            <person name="Ruan Y."/>
            <person name="Salzberg S.L."/>
            <person name="Sandelin A."/>
            <person name="Schneider C."/>
            <person name="Schoenbach C."/>
            <person name="Sekiguchi K."/>
            <person name="Semple C.A."/>
            <person name="Seno S."/>
            <person name="Sessa L."/>
            <person name="Sheng Y."/>
            <person name="Shibata Y."/>
            <person name="Shimada H."/>
            <person name="Shimada K."/>
            <person name="Silva D."/>
            <person name="Sinclair B."/>
            <person name="Sperling S."/>
            <person name="Stupka E."/>
            <person name="Sugiura K."/>
            <person name="Sultana R."/>
            <person name="Takenaka Y."/>
            <person name="Taki K."/>
            <person name="Tammoja K."/>
            <person name="Tan S.L."/>
            <person name="Tang S."/>
            <person name="Taylor M.S."/>
            <person name="Tegner J."/>
            <person name="Teichmann S.A."/>
            <person name="Ueda H.R."/>
            <person name="van Nimwegen E."/>
            <person name="Verardo R."/>
            <person name="Wei C.L."/>
            <person name="Yagi K."/>
            <person name="Yamanishi H."/>
            <person name="Zabarovsky E."/>
            <person name="Zhu S."/>
            <person name="Zimmer A."/>
            <person name="Hide W."/>
            <person name="Bult C."/>
            <person name="Grimmond S.M."/>
            <person name="Teasdale R.D."/>
            <person name="Liu E.T."/>
            <person name="Brusic V."/>
            <person name="Quackenbush J."/>
            <person name="Wahlestedt C."/>
            <person name="Mattick J.S."/>
            <person name="Hume D.A."/>
            <person name="Kai C."/>
            <person name="Sasaki D."/>
            <person name="Tomaru Y."/>
            <person name="Fukuda S."/>
            <person name="Kanamori-Katayama M."/>
            <person name="Suzuki M."/>
            <person name="Aoki J."/>
            <person name="Arakawa T."/>
            <person name="Iida J."/>
            <person name="Imamura K."/>
            <person name="Itoh M."/>
            <person name="Kato T."/>
            <person name="Kawaji H."/>
            <person name="Kawagashira N."/>
            <person name="Kawashima T."/>
            <person name="Kojima M."/>
            <person name="Kondo S."/>
            <person name="Konno H."/>
            <person name="Nakano K."/>
            <person name="Ninomiya N."/>
            <person name="Nishio T."/>
            <person name="Okada M."/>
            <person name="Plessy C."/>
            <person name="Shibata K."/>
            <person name="Shiraki T."/>
            <person name="Suzuki S."/>
            <person name="Tagami M."/>
            <person name="Waki K."/>
            <person name="Watahiki A."/>
            <person name="Okamura-Oho Y."/>
            <person name="Suzuki H."/>
            <person name="Kawai J."/>
            <person name="Hayashizaki Y."/>
        </authorList>
    </citation>
    <scope>NUCLEOTIDE SEQUENCE [LARGE SCALE MRNA]</scope>
    <source>
        <strain evidence="7">C57BL/6J</strain>
        <tissue evidence="7">Spinal cord</tissue>
    </source>
</reference>
<reference evidence="6" key="2">
    <citation type="journal article" date="2004" name="Genome Res.">
        <title>The status, quality, and expansion of the NIH full-length cDNA project: the Mammalian Gene Collection (MGC).</title>
        <authorList>
            <consortium name="The MGC Project Team"/>
        </authorList>
    </citation>
    <scope>NUCLEOTIDE SEQUENCE [LARGE SCALE MRNA]</scope>
    <source>
        <tissue evidence="6">Brain</tissue>
    </source>
</reference>
<reference evidence="5" key="3">
    <citation type="journal article" date="2006" name="J. Biol. Chem.">
        <title>A functional interaction between sprouty proteins and caveolin-1.</title>
        <authorList>
            <person name="Cabrita M.A."/>
            <person name="Jaeggi F."/>
            <person name="Widjaja S.P."/>
            <person name="Christofori G."/>
        </authorList>
    </citation>
    <scope>FUNCTION</scope>
    <scope>INTERACTION WITH CAV1</scope>
    <scope>MUTAGENESIS OF ARG-221</scope>
</reference>
<reference evidence="5" key="4">
    <citation type="journal article" date="2015" name="Hum. Mol. Genet.">
        <title>Regulation of SPRY3 by X chromosome and PAR2-linked promoters in an autism susceptibility region.</title>
        <authorList>
            <person name="Ning Z."/>
            <person name="McLellan A.S."/>
            <person name="Ball M."/>
            <person name="Wynne F."/>
            <person name="O'Neill C."/>
            <person name="Mills W."/>
            <person name="Quinn J.P."/>
            <person name="Kleinjan D.A."/>
            <person name="Anney R.J."/>
            <person name="Carmody R.J."/>
            <person name="O'Keeffe G."/>
            <person name="Moore T."/>
        </authorList>
    </citation>
    <scope>FUNCTION</scope>
    <scope>TISSUE SPECIFICITY</scope>
</reference>
<evidence type="ECO:0000250" key="1">
    <source>
        <dbReference type="UniProtKB" id="O43610"/>
    </source>
</evidence>
<evidence type="ECO:0000255" key="2">
    <source>
        <dbReference type="PROSITE-ProRule" id="PRU00572"/>
    </source>
</evidence>
<evidence type="ECO:0000269" key="3">
    <source>
    </source>
</evidence>
<evidence type="ECO:0000269" key="4">
    <source>
    </source>
</evidence>
<evidence type="ECO:0000305" key="5"/>
<evidence type="ECO:0000312" key="6">
    <source>
        <dbReference type="EMBL" id="AAI32136.1"/>
    </source>
</evidence>
<evidence type="ECO:0000312" key="7">
    <source>
        <dbReference type="EMBL" id="BAE23695.1"/>
    </source>
</evidence>
<evidence type="ECO:0000312" key="8">
    <source>
        <dbReference type="MGI" id="MGI:1345188"/>
    </source>
</evidence>
<comment type="function">
    <text evidence="1 3 4">Inhibits neurite branching, arbor length and neurite complexity (PubMed:26089202). Inhibits EGF-mediated p42/44 ERK signaling (PubMed:16877379). Negatively regulates the MAPK cascade, resulting in a reduction of extracellular matrix protein accumulation (By similarity). May function as an antagonist of fibroblast growth factor (FGF) pathways and may negatively modulate respiratory organogenesis (By similarity).</text>
</comment>
<comment type="subunit">
    <text evidence="1 3">Interacts with TESK1 (By similarity). Interacts with USP11 (By similarity). Interacts with CAV1 (via C-terminus) (PubMed:16877379).</text>
</comment>
<comment type="subcellular location">
    <subcellularLocation>
        <location evidence="1">Cytoplasm</location>
    </subcellularLocation>
</comment>
<comment type="tissue specificity">
    <text evidence="4">Expressed in the brain with expression the highest in Purkinje cell bodies and projections in the cerebellum (at protein level) (PubMed:26089202). Also expressed in central and peripheral nervous system ganglion cells, superior cervical ganglion and dorsal root ganglion (at protein level) (PubMed:26089202). Expressed in the retinal ganglion cell layer and the inner nuclear layer (at protein level) (PubMed:26089202).</text>
</comment>
<comment type="induction">
    <text evidence="1">By FGF signaling.</text>
</comment>
<comment type="similarity">
    <text evidence="5">Belongs to the sprouty family.</text>
</comment>
<feature type="chain" id="PRO_0000452086" description="Protein sprouty homolog 3">
    <location>
        <begin position="1"/>
        <end position="288"/>
    </location>
</feature>
<feature type="domain" description="SPR" evidence="2">
    <location>
        <begin position="154"/>
        <end position="267"/>
    </location>
</feature>
<feature type="mutagenesis site" description="Abolishes inhibition of EGF-mediated p42/44 ERK signaling." evidence="3">
    <original>R</original>
    <variation>D</variation>
    <location>
        <position position="221"/>
    </location>
</feature>
<name>SPRY3_MOUSE</name>
<accession>Q3UUD2</accession>
<protein>
    <recommendedName>
        <fullName evidence="5">Protein sprouty homolog 3</fullName>
        <shortName evidence="5">Spry-3</shortName>
    </recommendedName>
    <alternativeName>
        <fullName evidence="8">Sprouty RTK signaling antagonist 3</fullName>
    </alternativeName>
    <alternativeName>
        <fullName evidence="1">Sprouty3</fullName>
    </alternativeName>
</protein>
<sequence length="288" mass="31363">MDATVIDELQQILPIEQLRSTHASNDYVERPPAPCKQALSSPSLIVQTHKSDWSLATMPTALPRSISQCHQLQPLPQHLSQSSISSSMSQSTTASDQRLLASITPSPSGQSIIRTQPGAGAHPKVDGALKGEAEQSVGHSSDHLFICEECGRCKCVPCTAVRPLPSCWMCNQRCLCSAESLLDYGTCLCCVKGLFYHCSTDDEDNCADEPCSCGPSSCFIRWAAMSLISLFLPCLCCYLPTRGCLHMCQQGYDSLRRPGCRCKRHTNTVCRKISSSSSPFPKAQEKSV</sequence>
<gene>
    <name evidence="8" type="primary">Spry3</name>
</gene>
<organism evidence="7">
    <name type="scientific">Mus musculus</name>
    <name type="common">Mouse</name>
    <dbReference type="NCBI Taxonomy" id="10090"/>
    <lineage>
        <taxon>Eukaryota</taxon>
        <taxon>Metazoa</taxon>
        <taxon>Chordata</taxon>
        <taxon>Craniata</taxon>
        <taxon>Vertebrata</taxon>
        <taxon>Euteleostomi</taxon>
        <taxon>Mammalia</taxon>
        <taxon>Eutheria</taxon>
        <taxon>Euarchontoglires</taxon>
        <taxon>Glires</taxon>
        <taxon>Rodentia</taxon>
        <taxon>Myomorpha</taxon>
        <taxon>Muroidea</taxon>
        <taxon>Muridae</taxon>
        <taxon>Murinae</taxon>
        <taxon>Mus</taxon>
        <taxon>Mus</taxon>
    </lineage>
</organism>
<dbReference type="EMBL" id="BC132135">
    <property type="protein sequence ID" value="AAI32136.1"/>
    <property type="molecule type" value="mRNA"/>
</dbReference>
<dbReference type="EMBL" id="BC132137">
    <property type="protein sequence ID" value="AAI32138.1"/>
    <property type="molecule type" value="mRNA"/>
</dbReference>
<dbReference type="EMBL" id="AK138539">
    <property type="protein sequence ID" value="BAE23695.1"/>
    <property type="molecule type" value="mRNA"/>
</dbReference>
<dbReference type="RefSeq" id="NP_001025464.1">
    <property type="nucleotide sequence ID" value="NM_001030293.3"/>
</dbReference>
<dbReference type="RefSeq" id="NP_001388778.1">
    <property type="nucleotide sequence ID" value="NM_001401849.1"/>
</dbReference>
<dbReference type="RefSeq" id="NP_001388779.1">
    <property type="nucleotide sequence ID" value="NM_001401850.1"/>
</dbReference>
<dbReference type="RefSeq" id="NP_001388780.1">
    <property type="nucleotide sequence ID" value="NM_001401851.1"/>
</dbReference>
<dbReference type="FunCoup" id="Q3UUD2">
    <property type="interactions" value="477"/>
</dbReference>
<dbReference type="GlyGen" id="Q3UUD2">
    <property type="glycosylation" value="2 sites, 1 O-linked glycan (2 sites)"/>
</dbReference>
<dbReference type="iPTMnet" id="Q3UUD2"/>
<dbReference type="PhosphoSitePlus" id="Q3UUD2"/>
<dbReference type="DNASU" id="236576"/>
<dbReference type="GeneID" id="236576"/>
<dbReference type="KEGG" id="mmu:236576"/>
<dbReference type="UCSC" id="uc009uyn.1">
    <property type="organism name" value="mouse"/>
</dbReference>
<dbReference type="AGR" id="MGI:1345188"/>
<dbReference type="CTD" id="10251"/>
<dbReference type="MGI" id="MGI:1345188">
    <property type="gene designation" value="Spry3"/>
</dbReference>
<dbReference type="VEuPathDB" id="HostDB:ENSMUSG00000061654"/>
<dbReference type="HOGENOM" id="CLU_077696_1_0_1"/>
<dbReference type="InParanoid" id="Q3UUD2"/>
<dbReference type="OrthoDB" id="10038884at2759"/>
<dbReference type="PhylomeDB" id="Q3UUD2"/>
<dbReference type="BioGRID-ORCS" id="236576">
    <property type="hits" value="0 hits in 13 CRISPR screens"/>
</dbReference>
<dbReference type="PRO" id="PR:Q3UUD2"/>
<dbReference type="Proteomes" id="UP000000589">
    <property type="component" value="Unplaced"/>
</dbReference>
<dbReference type="GO" id="GO:0005737">
    <property type="term" value="C:cytoplasm"/>
    <property type="evidence" value="ECO:0007669"/>
    <property type="project" value="UniProtKB-SubCell"/>
</dbReference>
<dbReference type="GO" id="GO:0016020">
    <property type="term" value="C:membrane"/>
    <property type="evidence" value="ECO:0007669"/>
    <property type="project" value="InterPro"/>
</dbReference>
<dbReference type="GO" id="GO:0070373">
    <property type="term" value="P:negative regulation of ERK1 and ERK2 cascade"/>
    <property type="evidence" value="ECO:0000315"/>
    <property type="project" value="UniProtKB"/>
</dbReference>
<dbReference type="GO" id="GO:0043409">
    <property type="term" value="P:negative regulation of MAPK cascade"/>
    <property type="evidence" value="ECO:0000250"/>
    <property type="project" value="UniProtKB"/>
</dbReference>
<dbReference type="GO" id="GO:0150013">
    <property type="term" value="P:negative regulation of neuron projection arborization"/>
    <property type="evidence" value="ECO:0000315"/>
    <property type="project" value="UniProtKB"/>
</dbReference>
<dbReference type="GO" id="GO:0007399">
    <property type="term" value="P:nervous system development"/>
    <property type="evidence" value="ECO:0007669"/>
    <property type="project" value="UniProtKB-KW"/>
</dbReference>
<dbReference type="InterPro" id="IPR007875">
    <property type="entry name" value="Sprouty"/>
</dbReference>
<dbReference type="InterPro" id="IPR051192">
    <property type="entry name" value="Sprouty_domain"/>
</dbReference>
<dbReference type="PANTHER" id="PTHR12365:SF9">
    <property type="entry name" value="PROTEIN SPROUTY HOMOLOG 3"/>
    <property type="match status" value="1"/>
</dbReference>
<dbReference type="PANTHER" id="PTHR12365">
    <property type="entry name" value="SPROUTY"/>
    <property type="match status" value="1"/>
</dbReference>
<dbReference type="Pfam" id="PF05210">
    <property type="entry name" value="Sprouty"/>
    <property type="match status" value="1"/>
</dbReference>
<dbReference type="PROSITE" id="PS51227">
    <property type="entry name" value="SPR"/>
    <property type="match status" value="1"/>
</dbReference>